<reference key="1">
    <citation type="journal article" date="1993" name="Biochim. Biophys. Acta">
        <title>Characterization of a cDNA encoding a human kidney, cytochrome P-450 4A fatty acid omega-hydroxylase and the cognate enzyme expressed in Escherichia coli.</title>
        <authorList>
            <person name="Palmer C.N.A."/>
            <person name="Richardson T.H."/>
            <person name="Griffin K.J."/>
            <person name="Hsu M.-H."/>
            <person name="Muerhoff A.S."/>
            <person name="Clark J.E."/>
            <person name="Johnson E.F."/>
        </authorList>
    </citation>
    <scope>NUCLEOTIDE SEQUENCE [MRNA] (ISOFORM 1)</scope>
    <scope>FUNCTION</scope>
    <scope>CATALYTIC ACTIVITY</scope>
    <scope>ACTIVITY REGULATION</scope>
    <scope>TISSUE SPECIFICITY</scope>
    <source>
        <tissue>Kidney</tissue>
    </source>
</reference>
<reference key="2">
    <citation type="journal article" date="1994" name="J. Biochem.">
        <title>Purification and cDNA cloning of human liver CYP4A fatty acid omega-hydroxylase.</title>
        <authorList>
            <person name="Kawashima H."/>
            <person name="Kusunose E."/>
            <person name="Kikuta Y."/>
            <person name="Kinoshita H."/>
            <person name="Tanaka S."/>
            <person name="Yamamoto S."/>
            <person name="Kishimoto T."/>
            <person name="Kusunose M."/>
        </authorList>
    </citation>
    <scope>NUCLEOTIDE SEQUENCE [MRNA] (ISOFORM 1)</scope>
    <scope>PROTEIN SEQUENCE OF 5-24</scope>
    <scope>CHARACTERIZATION</scope>
    <source>
        <tissue>Liver</tissue>
    </source>
</reference>
<reference key="3">
    <citation type="journal article" date="1993" name="DNA Cell Biol.">
        <title>Complete cDNA sequence and cDNA-directed expression of CYP4A11, a fatty acid omega-hydroxylase expressed in human kidney.</title>
        <authorList>
            <person name="Imaoka S."/>
            <person name="Ogawa H."/>
            <person name="Kimura S."/>
            <person name="Gonzalez F.J."/>
        </authorList>
    </citation>
    <scope>NUCLEOTIDE SEQUENCE [MRNA] (ISOFORM 1)</scope>
    <scope>VARIANT SER-434</scope>
    <scope>CHARACTERIZATION</scope>
    <source>
        <tissue>Kidney</tissue>
    </source>
</reference>
<reference key="4">
    <citation type="journal article" date="2003" name="Arch. Biochem. Biophys.">
        <title>Characterization of the CYP4A11 gene, a second CYP4A gene in humans.</title>
        <authorList>
            <person name="Bellamine A."/>
            <person name="Wang Y."/>
            <person name="Waterman M.R."/>
            <person name="Gainer J.V. III"/>
            <person name="Dawson E.P."/>
            <person name="Brown N.J."/>
            <person name="Capdevila J.H."/>
        </authorList>
    </citation>
    <scope>NUCLEOTIDE SEQUENCE [MRNA] (ISOFORM 1)</scope>
</reference>
<reference key="5">
    <citation type="submission" date="2003-08" db="EMBL/GenBank/DDBJ databases">
        <authorList>
            <consortium name="SeattleSNPs variation discovery resource"/>
        </authorList>
    </citation>
    <scope>NUCLEOTIDE SEQUENCE [GENOMIC DNA] (ISOFORM 1)</scope>
    <scope>VARIANT SER-434</scope>
</reference>
<reference key="6">
    <citation type="journal article" date="2006" name="Nature">
        <title>The DNA sequence and biological annotation of human chromosome 1.</title>
        <authorList>
            <person name="Gregory S.G."/>
            <person name="Barlow K.F."/>
            <person name="McLay K.E."/>
            <person name="Kaul R."/>
            <person name="Swarbreck D."/>
            <person name="Dunham A."/>
            <person name="Scott C.E."/>
            <person name="Howe K.L."/>
            <person name="Woodfine K."/>
            <person name="Spencer C.C.A."/>
            <person name="Jones M.C."/>
            <person name="Gillson C."/>
            <person name="Searle S."/>
            <person name="Zhou Y."/>
            <person name="Kokocinski F."/>
            <person name="McDonald L."/>
            <person name="Evans R."/>
            <person name="Phillips K."/>
            <person name="Atkinson A."/>
            <person name="Cooper R."/>
            <person name="Jones C."/>
            <person name="Hall R.E."/>
            <person name="Andrews T.D."/>
            <person name="Lloyd C."/>
            <person name="Ainscough R."/>
            <person name="Almeida J.P."/>
            <person name="Ambrose K.D."/>
            <person name="Anderson F."/>
            <person name="Andrew R.W."/>
            <person name="Ashwell R.I.S."/>
            <person name="Aubin K."/>
            <person name="Babbage A.K."/>
            <person name="Bagguley C.L."/>
            <person name="Bailey J."/>
            <person name="Beasley H."/>
            <person name="Bethel G."/>
            <person name="Bird C.P."/>
            <person name="Bray-Allen S."/>
            <person name="Brown J.Y."/>
            <person name="Brown A.J."/>
            <person name="Buckley D."/>
            <person name="Burton J."/>
            <person name="Bye J."/>
            <person name="Carder C."/>
            <person name="Chapman J.C."/>
            <person name="Clark S.Y."/>
            <person name="Clarke G."/>
            <person name="Clee C."/>
            <person name="Cobley V."/>
            <person name="Collier R.E."/>
            <person name="Corby N."/>
            <person name="Coville G.J."/>
            <person name="Davies J."/>
            <person name="Deadman R."/>
            <person name="Dunn M."/>
            <person name="Earthrowl M."/>
            <person name="Ellington A.G."/>
            <person name="Errington H."/>
            <person name="Frankish A."/>
            <person name="Frankland J."/>
            <person name="French L."/>
            <person name="Garner P."/>
            <person name="Garnett J."/>
            <person name="Gay L."/>
            <person name="Ghori M.R.J."/>
            <person name="Gibson R."/>
            <person name="Gilby L.M."/>
            <person name="Gillett W."/>
            <person name="Glithero R.J."/>
            <person name="Grafham D.V."/>
            <person name="Griffiths C."/>
            <person name="Griffiths-Jones S."/>
            <person name="Grocock R."/>
            <person name="Hammond S."/>
            <person name="Harrison E.S.I."/>
            <person name="Hart E."/>
            <person name="Haugen E."/>
            <person name="Heath P.D."/>
            <person name="Holmes S."/>
            <person name="Holt K."/>
            <person name="Howden P.J."/>
            <person name="Hunt A.R."/>
            <person name="Hunt S.E."/>
            <person name="Hunter G."/>
            <person name="Isherwood J."/>
            <person name="James R."/>
            <person name="Johnson C."/>
            <person name="Johnson D."/>
            <person name="Joy A."/>
            <person name="Kay M."/>
            <person name="Kershaw J.K."/>
            <person name="Kibukawa M."/>
            <person name="Kimberley A.M."/>
            <person name="King A."/>
            <person name="Knights A.J."/>
            <person name="Lad H."/>
            <person name="Laird G."/>
            <person name="Lawlor S."/>
            <person name="Leongamornlert D.A."/>
            <person name="Lloyd D.M."/>
            <person name="Loveland J."/>
            <person name="Lovell J."/>
            <person name="Lush M.J."/>
            <person name="Lyne R."/>
            <person name="Martin S."/>
            <person name="Mashreghi-Mohammadi M."/>
            <person name="Matthews L."/>
            <person name="Matthews N.S.W."/>
            <person name="McLaren S."/>
            <person name="Milne S."/>
            <person name="Mistry S."/>
            <person name="Moore M.J.F."/>
            <person name="Nickerson T."/>
            <person name="O'Dell C.N."/>
            <person name="Oliver K."/>
            <person name="Palmeiri A."/>
            <person name="Palmer S.A."/>
            <person name="Parker A."/>
            <person name="Patel D."/>
            <person name="Pearce A.V."/>
            <person name="Peck A.I."/>
            <person name="Pelan S."/>
            <person name="Phelps K."/>
            <person name="Phillimore B.J."/>
            <person name="Plumb R."/>
            <person name="Rajan J."/>
            <person name="Raymond C."/>
            <person name="Rouse G."/>
            <person name="Saenphimmachak C."/>
            <person name="Sehra H.K."/>
            <person name="Sheridan E."/>
            <person name="Shownkeen R."/>
            <person name="Sims S."/>
            <person name="Skuce C.D."/>
            <person name="Smith M."/>
            <person name="Steward C."/>
            <person name="Subramanian S."/>
            <person name="Sycamore N."/>
            <person name="Tracey A."/>
            <person name="Tromans A."/>
            <person name="Van Helmond Z."/>
            <person name="Wall M."/>
            <person name="Wallis J.M."/>
            <person name="White S."/>
            <person name="Whitehead S.L."/>
            <person name="Wilkinson J.E."/>
            <person name="Willey D.L."/>
            <person name="Williams H."/>
            <person name="Wilming L."/>
            <person name="Wray P.W."/>
            <person name="Wu Z."/>
            <person name="Coulson A."/>
            <person name="Vaudin M."/>
            <person name="Sulston J.E."/>
            <person name="Durbin R.M."/>
            <person name="Hubbard T."/>
            <person name="Wooster R."/>
            <person name="Dunham I."/>
            <person name="Carter N.P."/>
            <person name="McVean G."/>
            <person name="Ross M.T."/>
            <person name="Harrow J."/>
            <person name="Olson M.V."/>
            <person name="Beck S."/>
            <person name="Rogers J."/>
            <person name="Bentley D.R."/>
        </authorList>
    </citation>
    <scope>NUCLEOTIDE SEQUENCE [LARGE SCALE GENOMIC DNA]</scope>
</reference>
<reference key="7">
    <citation type="journal article" date="2004" name="Genome Res.">
        <title>The status, quality, and expansion of the NIH full-length cDNA project: the Mammalian Gene Collection (MGC).</title>
        <authorList>
            <consortium name="The MGC Project Team"/>
        </authorList>
    </citation>
    <scope>NUCLEOTIDE SEQUENCE [LARGE SCALE MRNA] (ISOFORM 2)</scope>
    <source>
        <tissue>Colon</tissue>
    </source>
</reference>
<reference key="8">
    <citation type="journal article" date="1992" name="Biochim. Biophys. Acta">
        <title>Purification and NH2-terminal amino acid sequences of human and rat kidney fatty acid omega-hydroxylases.</title>
        <authorList>
            <person name="Kawashima H."/>
            <person name="Kusunose E."/>
            <person name="Kubota I."/>
            <person name="Maekawa M."/>
            <person name="Kusunose M."/>
        </authorList>
    </citation>
    <scope>PROTEIN SEQUENCE OF 5-39</scope>
    <scope>FUNCTION</scope>
    <scope>CATALYTIC ACTIVITY</scope>
    <scope>SUBCELLULAR LOCATION</scope>
    <source>
        <tissue>Kidney</tissue>
    </source>
</reference>
<reference key="9">
    <citation type="journal article" date="1993" name="Biochem. J.">
        <title>Species-specific induction of cytochrome P-450 4A RNAs: PCR cloning of partial guinea-pig, human and mouse CYP4A cDNAs.</title>
        <authorList>
            <person name="Bell D.R."/>
            <person name="Plant N.J."/>
            <person name="Rider C.G."/>
            <person name="Na L."/>
            <person name="Brown S."/>
            <person name="Ateitalla I."/>
            <person name="Acharya S.K."/>
            <person name="Davies M.H."/>
            <person name="Elias E.E."/>
            <person name="Jenkins N.A."/>
            <person name="Gilbert D.J."/>
            <person name="Copeland N.G."/>
            <person name="Elcombe C.R."/>
        </authorList>
    </citation>
    <scope>NUCLEOTIDE SEQUENCE [MRNA] OF 317-457</scope>
    <scope>VARIANTS GLY-353 AND SER-434</scope>
    <source>
        <tissue>Liver</tissue>
    </source>
</reference>
<reference key="10">
    <citation type="journal article" date="1996" name="Arch. Biochem. Biophys.">
        <title>Identification of CYP4A11 as the major lauric acid omega-hydroxylase in human liver microsomes.</title>
        <authorList>
            <person name="Powell P.K."/>
            <person name="Wolf I."/>
            <person name="Lasker J.M."/>
        </authorList>
    </citation>
    <scope>FUNCTION</scope>
    <scope>CATALYTIC ACTIVITY</scope>
</reference>
<reference key="11">
    <citation type="journal article" date="1999" name="J. Lipid Res.">
        <title>Requirement for omega and (omega;-1)-hydroxylations of fatty acids by human cytochromes P450 2E1 and 4A11.</title>
        <authorList>
            <person name="Adas F."/>
            <person name="Salauen J.P."/>
            <person name="Berthou F."/>
            <person name="Picart D."/>
            <person name="Simon B."/>
            <person name="Amet Y."/>
        </authorList>
    </citation>
    <scope>FUNCTION</scope>
    <scope>CATALYTIC ACTIVITY</scope>
    <scope>ACTIVITY REGULATION</scope>
</reference>
<reference key="12">
    <citation type="journal article" date="2000" name="Arch. Biochem. Biophys.">
        <title>Structural determination of the substrate specificities and regioselectivities of the rat and human fatty acid omega-hydroxylases.</title>
        <authorList>
            <person name="Hoch U."/>
            <person name="Zhang Z."/>
            <person name="Kroetz D.L."/>
            <person name="Ortiz de Montellano P.R."/>
        </authorList>
    </citation>
    <scope>FUNCTION</scope>
    <scope>CATALYTIC ACTIVITY</scope>
    <scope>BIOPHYSICOCHEMICAL PROPERTIES</scope>
    <scope>PATHWAY</scope>
</reference>
<reference key="13">
    <citation type="journal article" date="2000" name="J. Biol. Chem.">
        <title>Formation of 20-hydroxyeicosatetraenoic acid, a vasoactive and natriuretic eicosanoid, in human kidney. Role of CYP4F2 and CYP4A11.</title>
        <authorList>
            <person name="Lasker J.M."/>
            <person name="Chen W.B."/>
            <person name="Wolf I."/>
            <person name="Bloswick B.P."/>
            <person name="Wilson P.D."/>
            <person name="Powell P.K."/>
        </authorList>
    </citation>
    <scope>FUNCTION</scope>
    <scope>CATALYTIC ACTIVITY</scope>
    <scope>TISSUE SPECIFICITY</scope>
    <scope>PATHWAY</scope>
</reference>
<reference key="14">
    <citation type="journal article" date="2001" name="J. Biol. Chem.">
        <title>Covalently linked heme in cytochrome P4504A fatty acid hydroxylases.</title>
        <authorList>
            <person name="Hoch U."/>
            <person name="Ortiz de Montellano P.R."/>
        </authorList>
    </citation>
    <scope>COVALENT HEME ATTACHMENT</scope>
</reference>
<reference key="15">
    <citation type="journal article" date="2002" name="J. Biol. Chem.">
        <title>Autocatalytic mechanism and consequences of covalent heme attachment in the cytochrome P4504A family.</title>
        <authorList>
            <person name="LeBrun L.A."/>
            <person name="Hoch U."/>
            <person name="Ortiz de Montellano P.R."/>
        </authorList>
    </citation>
    <scope>COVALENT HEME ATTACHMENT</scope>
    <scope>MUTAGENESIS OF GLU-321</scope>
</reference>
<reference key="16">
    <citation type="journal article" date="2004" name="J. Lipid Res.">
        <title>Human CYP4F3s are the main catalysts in the oxidation of fatty acid epoxides.</title>
        <authorList>
            <person name="Le Quere V."/>
            <person name="Plee-Gautier E."/>
            <person name="Potin P."/>
            <person name="Madec S."/>
            <person name="Salauen J.P."/>
        </authorList>
    </citation>
    <scope>FUNCTION</scope>
    <scope>CATALYTIC ACTIVITY</scope>
</reference>
<reference key="17">
    <citation type="journal article" date="2005" name="Circulation">
        <title>Functional variant of CYP4A11 20-hydroxyeicosatetraenoic acid synthase is associated with essential hypertension.</title>
        <authorList>
            <person name="Gainer J.V."/>
            <person name="Bellamine A."/>
            <person name="Dawson E.P."/>
            <person name="Womble K.E."/>
            <person name="Grant S.W."/>
            <person name="Wang Y."/>
            <person name="Cupples L.A."/>
            <person name="Guo C.-Y."/>
            <person name="Demissie S."/>
            <person name="O'Donnell C.J."/>
            <person name="Brown N.J."/>
            <person name="Waterman M.R."/>
            <person name="Capdevila J.H."/>
        </authorList>
    </citation>
    <scope>FUNCTION</scope>
    <scope>CATALYTIC ACTIVITY</scope>
    <scope>MUTAGENESIS OF GLY-130</scope>
    <scope>VARIANT SER-434</scope>
    <scope>BIOPHYSICOCHEMICAL PROPERTIES</scope>
    <scope>PATHWAY</scope>
</reference>
<reference key="18">
    <citation type="journal article" date="2008" name="FASEB J.">
        <title>Characterization of the human omega-oxidation pathway for omega-hydroxy-very-long-chain fatty acids.</title>
        <authorList>
            <person name="Sanders R.J."/>
            <person name="Ofman R."/>
            <person name="Dacremont G."/>
            <person name="Wanders R.J."/>
            <person name="Kemp S."/>
        </authorList>
    </citation>
    <scope>FUNCTION</scope>
    <scope>CATALYTIC ACTIVITY</scope>
</reference>
<reference key="19">
    <citation type="journal article" date="2008" name="J. Lipid Res.">
        <title>Omega oxidation of 3-hydroxy fatty acids by the human CYP4F gene subfamily enzyme CYP4F11.</title>
        <authorList>
            <person name="Dhar M."/>
            <person name="Sepkovic D.W."/>
            <person name="Hirani V."/>
            <person name="Magnusson R.P."/>
            <person name="Lasker J.M."/>
        </authorList>
    </citation>
    <scope>FUNCTION</scope>
    <scope>CATALYTIC ACTIVITY</scope>
</reference>
<reference key="20">
    <citation type="journal article" date="2005" name="J. Hum. Genet.">
        <title>Highly polymorphic human CYP4A11 gene.</title>
        <authorList>
            <person name="Cho B.H."/>
            <person name="Park B.L."/>
            <person name="Kim L.H."/>
            <person name="Chung H.S."/>
            <person name="Shin H.D."/>
        </authorList>
    </citation>
    <scope>VARIANTS GLY-353 AND SER-434</scope>
</reference>
<dbReference type="EC" id="1.14.14.1" evidence="2 4 8 10 13 17"/>
<dbReference type="EC" id="1.14.14.80" evidence="10 13"/>
<dbReference type="EMBL" id="L04751">
    <property type="protein sequence ID" value="AAA58436.1"/>
    <property type="molecule type" value="mRNA"/>
</dbReference>
<dbReference type="EMBL" id="D26481">
    <property type="protein sequence ID" value="BAA05491.1"/>
    <property type="molecule type" value="mRNA"/>
</dbReference>
<dbReference type="EMBL" id="S67580">
    <property type="protein sequence ID" value="AAB29502.1"/>
    <property type="molecule type" value="mRNA"/>
</dbReference>
<dbReference type="EMBL" id="S67581">
    <property type="protein sequence ID" value="AAB29503.1"/>
    <property type="molecule type" value="mRNA"/>
</dbReference>
<dbReference type="EMBL" id="AF525488">
    <property type="protein sequence ID" value="AAO16078.1"/>
    <property type="molecule type" value="Genomic_DNA"/>
</dbReference>
<dbReference type="EMBL" id="AY369778">
    <property type="protein sequence ID" value="AAQ56847.1"/>
    <property type="molecule type" value="Genomic_DNA"/>
</dbReference>
<dbReference type="EMBL" id="AL731892">
    <property type="status" value="NOT_ANNOTATED_CDS"/>
    <property type="molecule type" value="Genomic_DNA"/>
</dbReference>
<dbReference type="EMBL" id="BC041158">
    <property type="protein sequence ID" value="AAH41158.1"/>
    <property type="molecule type" value="mRNA"/>
</dbReference>
<dbReference type="EMBL" id="X71480">
    <property type="protein sequence ID" value="CAA50586.1"/>
    <property type="molecule type" value="mRNA"/>
</dbReference>
<dbReference type="CCDS" id="CCDS543.1">
    <molecule id="Q02928-1"/>
</dbReference>
<dbReference type="PIR" id="A56859">
    <property type="entry name" value="A56859"/>
</dbReference>
<dbReference type="PIR" id="I53015">
    <property type="entry name" value="I53015"/>
</dbReference>
<dbReference type="PIR" id="I65981">
    <property type="entry name" value="I65981"/>
</dbReference>
<dbReference type="PIR" id="JX0331">
    <property type="entry name" value="JX0331"/>
</dbReference>
<dbReference type="RefSeq" id="NP_000769.2">
    <molecule id="Q02928-1"/>
    <property type="nucleotide sequence ID" value="NM_000778.4"/>
</dbReference>
<dbReference type="RefSeq" id="NP_001306084.1">
    <property type="nucleotide sequence ID" value="NM_001319155.1"/>
</dbReference>
<dbReference type="SMR" id="Q02928"/>
<dbReference type="BioGRID" id="107951">
    <property type="interactions" value="4"/>
</dbReference>
<dbReference type="FunCoup" id="Q02928">
    <property type="interactions" value="100"/>
</dbReference>
<dbReference type="IntAct" id="Q02928">
    <property type="interactions" value="2"/>
</dbReference>
<dbReference type="STRING" id="9606.ENSP00000311095"/>
<dbReference type="BindingDB" id="Q02928"/>
<dbReference type="ChEMBL" id="CHEMBL3978"/>
<dbReference type="DrugBank" id="DB00515">
    <property type="generic name" value="Cisplatin"/>
</dbReference>
<dbReference type="DrugBank" id="DB00636">
    <property type="generic name" value="Clofibrate"/>
</dbReference>
<dbReference type="DrugBank" id="DB01234">
    <property type="generic name" value="Dexamethasone"/>
</dbReference>
<dbReference type="DrugBank" id="DB14649">
    <property type="generic name" value="Dexamethasone acetate"/>
</dbReference>
<dbReference type="DrugBank" id="DB00898">
    <property type="generic name" value="Ethanol"/>
</dbReference>
<dbReference type="DrugBank" id="DB13125">
    <property type="generic name" value="Lusutrombopag"/>
</dbReference>
<dbReference type="DrugBank" id="DB00157">
    <property type="generic name" value="NADH"/>
</dbReference>
<dbReference type="DrugBank" id="DB00082">
    <property type="generic name" value="Pegvisomant"/>
</dbReference>
<dbReference type="DrugBank" id="DB00738">
    <property type="generic name" value="Pentamidine"/>
</dbReference>
<dbReference type="DrugBank" id="DB04977">
    <property type="generic name" value="Plitidepsin"/>
</dbReference>
<dbReference type="DrugBank" id="DB11077">
    <property type="generic name" value="Polyethylene glycol 400"/>
</dbReference>
<dbReference type="DrugBank" id="DB11156">
    <property type="generic name" value="Pyrantel"/>
</dbReference>
<dbReference type="DrugBank" id="DB14004">
    <property type="generic name" value="Tildrakizumab"/>
</dbReference>
<dbReference type="DrugBank" id="DB00755">
    <property type="generic name" value="Tretinoin"/>
</dbReference>
<dbReference type="DrugCentral" id="Q02928"/>
<dbReference type="GuidetoPHARMACOLOGY" id="1341"/>
<dbReference type="SwissLipids" id="SLP:000000398"/>
<dbReference type="iPTMnet" id="Q02928"/>
<dbReference type="PhosphoSitePlus" id="Q02928"/>
<dbReference type="BioMuta" id="CYP4A11"/>
<dbReference type="DMDM" id="2493371"/>
<dbReference type="jPOST" id="Q02928"/>
<dbReference type="MassIVE" id="Q02928"/>
<dbReference type="PaxDb" id="9606-ENSP00000311095"/>
<dbReference type="PeptideAtlas" id="Q02928"/>
<dbReference type="ProteomicsDB" id="58135">
    <molecule id="Q02928-1"/>
</dbReference>
<dbReference type="ProteomicsDB" id="58136">
    <molecule id="Q02928-2"/>
</dbReference>
<dbReference type="Antibodypedia" id="32832">
    <property type="antibodies" value="225 antibodies from 31 providers"/>
</dbReference>
<dbReference type="DNASU" id="1579"/>
<dbReference type="Ensembl" id="ENST00000310638.9">
    <molecule id="Q02928-1"/>
    <property type="protein sequence ID" value="ENSP00000311095.4"/>
    <property type="gene ID" value="ENSG00000187048.14"/>
</dbReference>
<dbReference type="GeneID" id="1579"/>
<dbReference type="KEGG" id="hsa:1579"/>
<dbReference type="MANE-Select" id="ENST00000310638.9">
    <property type="protein sequence ID" value="ENSP00000311095.4"/>
    <property type="RefSeq nucleotide sequence ID" value="NM_000778.4"/>
    <property type="RefSeq protein sequence ID" value="NP_000769.2"/>
</dbReference>
<dbReference type="UCSC" id="uc001cqp.5">
    <molecule id="Q02928-1"/>
    <property type="organism name" value="human"/>
</dbReference>
<dbReference type="AGR" id="HGNC:2642"/>
<dbReference type="CTD" id="1579"/>
<dbReference type="DisGeNET" id="1579"/>
<dbReference type="GeneCards" id="CYP4A11"/>
<dbReference type="HGNC" id="HGNC:2642">
    <property type="gene designation" value="CYP4A11"/>
</dbReference>
<dbReference type="HPA" id="ENSG00000187048">
    <property type="expression patterns" value="Group enriched (kidney, liver)"/>
</dbReference>
<dbReference type="MIM" id="601310">
    <property type="type" value="gene"/>
</dbReference>
<dbReference type="neXtProt" id="NX_Q02928"/>
<dbReference type="OpenTargets" id="ENSG00000187048"/>
<dbReference type="PharmGKB" id="PA27118"/>
<dbReference type="VEuPathDB" id="HostDB:ENSG00000187048"/>
<dbReference type="eggNOG" id="KOG0157">
    <property type="taxonomic scope" value="Eukaryota"/>
</dbReference>
<dbReference type="GeneTree" id="ENSGT00940000163504"/>
<dbReference type="InParanoid" id="Q02928"/>
<dbReference type="OMA" id="ASITWHH"/>
<dbReference type="OrthoDB" id="1470350at2759"/>
<dbReference type="PAN-GO" id="Q02928">
    <property type="GO annotations" value="8 GO annotations based on evolutionary models"/>
</dbReference>
<dbReference type="PhylomeDB" id="Q02928"/>
<dbReference type="TreeFam" id="TF105088"/>
<dbReference type="BRENDA" id="1.14.14.80">
    <property type="organism ID" value="2681"/>
</dbReference>
<dbReference type="PathwayCommons" id="Q02928"/>
<dbReference type="Reactome" id="R-HSA-1989781">
    <property type="pathway name" value="PPARA activates gene expression"/>
</dbReference>
<dbReference type="Reactome" id="R-HSA-211935">
    <property type="pathway name" value="Fatty acids"/>
</dbReference>
<dbReference type="Reactome" id="R-HSA-211958">
    <property type="pathway name" value="Miscellaneous substrates"/>
</dbReference>
<dbReference type="Reactome" id="R-HSA-211979">
    <property type="pathway name" value="Eicosanoids"/>
</dbReference>
<dbReference type="Reactome" id="R-HSA-2142691">
    <property type="pathway name" value="Synthesis of Leukotrienes (LT) and Eoxins (EX)"/>
</dbReference>
<dbReference type="Reactome" id="R-HSA-2142816">
    <property type="pathway name" value="Synthesis of (16-20)-hydroxyeicosatetraenoic acids (HETE)"/>
</dbReference>
<dbReference type="SABIO-RK" id="Q02928"/>
<dbReference type="SignaLink" id="Q02928"/>
<dbReference type="UniPathway" id="UPA00382"/>
<dbReference type="UniPathway" id="UPA00383"/>
<dbReference type="BioGRID-ORCS" id="1579">
    <property type="hits" value="12 hits in 1144 CRISPR screens"/>
</dbReference>
<dbReference type="ChiTaRS" id="CYP4A11">
    <property type="organism name" value="human"/>
</dbReference>
<dbReference type="GeneWiki" id="CYP4A11"/>
<dbReference type="GenomeRNAi" id="1579"/>
<dbReference type="Pharos" id="Q02928">
    <property type="development level" value="Tbio"/>
</dbReference>
<dbReference type="PRO" id="PR:Q02928"/>
<dbReference type="Proteomes" id="UP000005640">
    <property type="component" value="Chromosome 1"/>
</dbReference>
<dbReference type="RNAct" id="Q02928">
    <property type="molecule type" value="protein"/>
</dbReference>
<dbReference type="Bgee" id="ENSG00000187048">
    <property type="expression patterns" value="Expressed in right lobe of liver and 92 other cell types or tissues"/>
</dbReference>
<dbReference type="ExpressionAtlas" id="Q02928">
    <property type="expression patterns" value="baseline and differential"/>
</dbReference>
<dbReference type="GO" id="GO:0016324">
    <property type="term" value="C:apical plasma membrane"/>
    <property type="evidence" value="ECO:0000314"/>
    <property type="project" value="UniProtKB"/>
</dbReference>
<dbReference type="GO" id="GO:0005737">
    <property type="term" value="C:cytoplasm"/>
    <property type="evidence" value="ECO:0000314"/>
    <property type="project" value="UniProtKB"/>
</dbReference>
<dbReference type="GO" id="GO:0005789">
    <property type="term" value="C:endoplasmic reticulum membrane"/>
    <property type="evidence" value="ECO:0000304"/>
    <property type="project" value="Reactome"/>
</dbReference>
<dbReference type="GO" id="GO:0043231">
    <property type="term" value="C:intracellular membrane-bounded organelle"/>
    <property type="evidence" value="ECO:0000314"/>
    <property type="project" value="UniProtKB"/>
</dbReference>
<dbReference type="GO" id="GO:0018685">
    <property type="term" value="F:alkane 1-monooxygenase activity"/>
    <property type="evidence" value="ECO:0000314"/>
    <property type="project" value="BHF-UCL"/>
</dbReference>
<dbReference type="GO" id="GO:0008392">
    <property type="term" value="F:arachidonate epoxygenase activity"/>
    <property type="evidence" value="ECO:0000314"/>
    <property type="project" value="UniProtKB"/>
</dbReference>
<dbReference type="GO" id="GO:0008391">
    <property type="term" value="F:arachidonate monooxygenase activity"/>
    <property type="evidence" value="ECO:0000318"/>
    <property type="project" value="GO_Central"/>
</dbReference>
<dbReference type="GO" id="GO:0052869">
    <property type="term" value="F:arachidonate omega-hydroxylase activity"/>
    <property type="evidence" value="ECO:0007669"/>
    <property type="project" value="RHEA"/>
</dbReference>
<dbReference type="GO" id="GO:0020037">
    <property type="term" value="F:heme binding"/>
    <property type="evidence" value="ECO:0007669"/>
    <property type="project" value="InterPro"/>
</dbReference>
<dbReference type="GO" id="GO:0005506">
    <property type="term" value="F:iron ion binding"/>
    <property type="evidence" value="ECO:0007669"/>
    <property type="project" value="InterPro"/>
</dbReference>
<dbReference type="GO" id="GO:0050051">
    <property type="term" value="F:leukotriene-B4 20-monooxygenase activity"/>
    <property type="evidence" value="ECO:0000314"/>
    <property type="project" value="UniProtKB"/>
</dbReference>
<dbReference type="GO" id="GO:0102033">
    <property type="term" value="F:long-chain fatty acid omega-hydroxylase activity"/>
    <property type="evidence" value="ECO:0000314"/>
    <property type="project" value="UniProtKB"/>
</dbReference>
<dbReference type="GO" id="GO:0004497">
    <property type="term" value="F:monooxygenase activity"/>
    <property type="evidence" value="ECO:0000304"/>
    <property type="project" value="Reactome"/>
</dbReference>
<dbReference type="GO" id="GO:0019369">
    <property type="term" value="P:arachidonate metabolic process"/>
    <property type="evidence" value="ECO:0000314"/>
    <property type="project" value="UniProtKB"/>
</dbReference>
<dbReference type="GO" id="GO:0019373">
    <property type="term" value="P:epoxygenase P450 pathway"/>
    <property type="evidence" value="ECO:0000314"/>
    <property type="project" value="UniProtKB"/>
</dbReference>
<dbReference type="GO" id="GO:0006631">
    <property type="term" value="P:fatty acid metabolic process"/>
    <property type="evidence" value="ECO:0000304"/>
    <property type="project" value="Reactome"/>
</dbReference>
<dbReference type="GO" id="GO:0046456">
    <property type="term" value="P:icosanoid biosynthetic process"/>
    <property type="evidence" value="ECO:0000318"/>
    <property type="project" value="GO_Central"/>
</dbReference>
<dbReference type="GO" id="GO:0001822">
    <property type="term" value="P:kidney development"/>
    <property type="evidence" value="ECO:0000318"/>
    <property type="project" value="GO_Central"/>
</dbReference>
<dbReference type="GO" id="GO:0048252">
    <property type="term" value="P:lauric acid metabolic process"/>
    <property type="evidence" value="ECO:0000318"/>
    <property type="project" value="GO_Central"/>
</dbReference>
<dbReference type="GO" id="GO:0006691">
    <property type="term" value="P:leukotriene metabolic process"/>
    <property type="evidence" value="ECO:0000314"/>
    <property type="project" value="UniProtKB"/>
</dbReference>
<dbReference type="GO" id="GO:0043651">
    <property type="term" value="P:linoleic acid metabolic process"/>
    <property type="evidence" value="ECO:0000318"/>
    <property type="project" value="GO_Central"/>
</dbReference>
<dbReference type="GO" id="GO:0001676">
    <property type="term" value="P:long-chain fatty acid metabolic process"/>
    <property type="evidence" value="ECO:0000314"/>
    <property type="project" value="BHF-UCL"/>
</dbReference>
<dbReference type="GO" id="GO:0097267">
    <property type="term" value="P:omega-hydroxylase P450 pathway"/>
    <property type="evidence" value="ECO:0000304"/>
    <property type="project" value="Reactome"/>
</dbReference>
<dbReference type="GO" id="GO:0031408">
    <property type="term" value="P:oxylipin biosynthetic process"/>
    <property type="evidence" value="ECO:0007669"/>
    <property type="project" value="UniProtKB-UniPathway"/>
</dbReference>
<dbReference type="GO" id="GO:0032305">
    <property type="term" value="P:positive regulation of icosanoid secretion"/>
    <property type="evidence" value="ECO:0000315"/>
    <property type="project" value="UniProtKB"/>
</dbReference>
<dbReference type="GO" id="GO:0003095">
    <property type="term" value="P:pressure natriuresis"/>
    <property type="evidence" value="ECO:0000270"/>
    <property type="project" value="UniProtKB"/>
</dbReference>
<dbReference type="GO" id="GO:0003091">
    <property type="term" value="P:renal water homeostasis"/>
    <property type="evidence" value="ECO:0000270"/>
    <property type="project" value="UniProtKB"/>
</dbReference>
<dbReference type="GO" id="GO:0055078">
    <property type="term" value="P:sodium ion homeostasis"/>
    <property type="evidence" value="ECO:0000270"/>
    <property type="project" value="UniProtKB"/>
</dbReference>
<dbReference type="CDD" id="cd20678">
    <property type="entry name" value="CYP4B-like"/>
    <property type="match status" value="1"/>
</dbReference>
<dbReference type="FunFam" id="1.10.630.10:FF:000005">
    <property type="entry name" value="cytochrome P450 4F22 isoform X2"/>
    <property type="match status" value="1"/>
</dbReference>
<dbReference type="Gene3D" id="1.10.630.10">
    <property type="entry name" value="Cytochrome P450"/>
    <property type="match status" value="1"/>
</dbReference>
<dbReference type="InterPro" id="IPR001128">
    <property type="entry name" value="Cyt_P450"/>
</dbReference>
<dbReference type="InterPro" id="IPR017972">
    <property type="entry name" value="Cyt_P450_CS"/>
</dbReference>
<dbReference type="InterPro" id="IPR002401">
    <property type="entry name" value="Cyt_P450_E_grp-I"/>
</dbReference>
<dbReference type="InterPro" id="IPR036396">
    <property type="entry name" value="Cyt_P450_sf"/>
</dbReference>
<dbReference type="InterPro" id="IPR050196">
    <property type="entry name" value="Cytochrome_P450_Monoox"/>
</dbReference>
<dbReference type="PANTHER" id="PTHR24291:SF39">
    <property type="entry name" value="CYTOCHROME P450 4A11-RELATED"/>
    <property type="match status" value="1"/>
</dbReference>
<dbReference type="PANTHER" id="PTHR24291">
    <property type="entry name" value="CYTOCHROME P450 FAMILY 4"/>
    <property type="match status" value="1"/>
</dbReference>
<dbReference type="Pfam" id="PF00067">
    <property type="entry name" value="p450"/>
    <property type="match status" value="1"/>
</dbReference>
<dbReference type="PRINTS" id="PR00463">
    <property type="entry name" value="EP450I"/>
</dbReference>
<dbReference type="PRINTS" id="PR00385">
    <property type="entry name" value="P450"/>
</dbReference>
<dbReference type="SUPFAM" id="SSF48264">
    <property type="entry name" value="Cytochrome P450"/>
    <property type="match status" value="1"/>
</dbReference>
<dbReference type="PROSITE" id="PS00086">
    <property type="entry name" value="CYTOCHROME_P450"/>
    <property type="match status" value="1"/>
</dbReference>
<feature type="propeptide" id="PRO_0000003579" evidence="10 14">
    <location>
        <begin position="1"/>
        <end position="4"/>
    </location>
</feature>
<feature type="chain" id="PRO_0000003580" description="Cytochrome P450 4A11">
    <location>
        <begin position="5"/>
        <end position="519"/>
    </location>
</feature>
<feature type="binding site" description="covalent" evidence="5">
    <location>
        <position position="321"/>
    </location>
    <ligand>
        <name>heme</name>
        <dbReference type="ChEBI" id="CHEBI:30413"/>
    </ligand>
</feature>
<feature type="binding site" description="axial binding residue" evidence="5">
    <location>
        <position position="457"/>
    </location>
    <ligand>
        <name>heme</name>
        <dbReference type="ChEBI" id="CHEBI:30413"/>
    </ligand>
    <ligandPart>
        <name>Fe</name>
        <dbReference type="ChEBI" id="CHEBI:18248"/>
    </ligandPart>
</feature>
<feature type="modified residue" description="Phosphoserine" evidence="1">
    <location>
        <position position="440"/>
    </location>
</feature>
<feature type="splice variant" id="VSP_034595" description="In isoform 2." evidence="20">
    <location>
        <begin position="356"/>
        <end position="519"/>
    </location>
</feature>
<feature type="sequence variant" id="VAR_048452" description="In dbSNP:rs12759923.">
    <original>N</original>
    <variation>S</variation>
    <location>
        <position position="226"/>
    </location>
</feature>
<feature type="sequence variant" id="VAR_044377" description="In dbSNP:rs3899049." evidence="9 16">
    <original>S</original>
    <variation>G</variation>
    <location>
        <position position="353"/>
    </location>
</feature>
<feature type="sequence variant" id="VAR_019160" description="Risk factor for hypertension; significantly reduced arachidonic acid and lauric acid metabolizing activity; dbSNP:rs1126742." evidence="8 9 15 16 18">
    <original>F</original>
    <variation>S</variation>
    <location>
        <position position="434"/>
    </location>
</feature>
<feature type="sequence variant" id="VAR_001257" description="In CYP4A11V.">
    <original>NGIHLRLRRLPNPCEDKDQL</original>
    <variation>MESTCVSGGSLTLVKTRTSFEGLHLPSCLPDPRFCPLPVCPYPVFCLPTFPSSHLPAVPQSACPSLSHLSPGLPTCLSTCLLPTCISCWEKS</variation>
    <location>
        <begin position="500"/>
        <end position="519"/>
    </location>
</feature>
<feature type="mutagenesis site" description="Loss of activity." evidence="8">
    <original>G</original>
    <variation>S</variation>
    <location>
        <position position="130"/>
    </location>
</feature>
<feature type="mutagenesis site" description="Loss of covalent heme binding." evidence="6">
    <original>E</original>
    <variation>A</variation>
    <location>
        <position position="321"/>
    </location>
</feature>
<feature type="sequence conflict" description="In Ref. 8; AA sequence." evidence="23" ref="8">
    <original>V</original>
    <variation>A</variation>
    <location>
        <position position="5"/>
    </location>
</feature>
<feature type="sequence conflict" description="In Ref. 4; AAO16078." evidence="23" ref="4">
    <original>Y</original>
    <variation>F</variation>
    <location>
        <position position="383"/>
    </location>
</feature>
<feature type="sequence conflict" description="In Ref. 9; CAA50586." evidence="23" ref="9">
    <original>G</original>
    <variation>S</variation>
    <location>
        <position position="390"/>
    </location>
</feature>
<feature type="sequence conflict" description="In Ref. 9; CAA50586." evidence="23" ref="9">
    <original>MVL</original>
    <variation>TVM</variation>
    <location>
        <begin position="410"/>
        <end position="412"/>
    </location>
</feature>
<evidence type="ECO:0000250" key="1">
    <source>
        <dbReference type="UniProtKB" id="P20816"/>
    </source>
</evidence>
<evidence type="ECO:0000269" key="2">
    <source>
    </source>
</evidence>
<evidence type="ECO:0000269" key="3">
    <source>
    </source>
</evidence>
<evidence type="ECO:0000269" key="4">
    <source>
    </source>
</evidence>
<evidence type="ECO:0000269" key="5">
    <source>
    </source>
</evidence>
<evidence type="ECO:0000269" key="6">
    <source>
    </source>
</evidence>
<evidence type="ECO:0000269" key="7">
    <source>
    </source>
</evidence>
<evidence type="ECO:0000269" key="8">
    <source>
    </source>
</evidence>
<evidence type="ECO:0000269" key="9">
    <source>
    </source>
</evidence>
<evidence type="ECO:0000269" key="10">
    <source>
    </source>
</evidence>
<evidence type="ECO:0000269" key="11">
    <source>
    </source>
</evidence>
<evidence type="ECO:0000269" key="12">
    <source>
    </source>
</evidence>
<evidence type="ECO:0000269" key="13">
    <source>
    </source>
</evidence>
<evidence type="ECO:0000269" key="14">
    <source>
    </source>
</evidence>
<evidence type="ECO:0000269" key="15">
    <source>
    </source>
</evidence>
<evidence type="ECO:0000269" key="16">
    <source>
    </source>
</evidence>
<evidence type="ECO:0000269" key="17">
    <source>
    </source>
</evidence>
<evidence type="ECO:0000269" key="18">
    <source ref="5"/>
</evidence>
<evidence type="ECO:0000303" key="19">
    <source>
    </source>
</evidence>
<evidence type="ECO:0000303" key="20">
    <source>
    </source>
</evidence>
<evidence type="ECO:0000303" key="21">
    <source>
    </source>
</evidence>
<evidence type="ECO:0000303" key="22">
    <source>
    </source>
</evidence>
<evidence type="ECO:0000305" key="23"/>
<evidence type="ECO:0000305" key="24">
    <source>
    </source>
</evidence>
<evidence type="ECO:0000305" key="25">
    <source>
    </source>
</evidence>
<evidence type="ECO:0000305" key="26">
    <source>
    </source>
</evidence>
<evidence type="ECO:0000305" key="27">
    <source>
    </source>
</evidence>
<evidence type="ECO:0000305" key="28">
    <source>
    </source>
</evidence>
<evidence type="ECO:0000305" key="29">
    <source>
    </source>
</evidence>
<evidence type="ECO:0000305" key="30">
    <source>
    </source>
</evidence>
<evidence type="ECO:0000305" key="31">
    <source>
    </source>
</evidence>
<evidence type="ECO:0000312" key="32">
    <source>
        <dbReference type="HGNC" id="HGNC:2642"/>
    </source>
</evidence>
<accession>Q02928</accession>
<accession>Q06766</accession>
<accession>Q16865</accession>
<accession>Q16866</accession>
<accession>Q5VSP8</accession>
<accession>Q86SU6</accession>
<accession>Q8IWY5</accession>
<protein>
    <recommendedName>
        <fullName evidence="19">Cytochrome P450 4A11</fullName>
        <ecNumber evidence="2 4 8 10 13 17">1.14.14.1</ecNumber>
    </recommendedName>
    <alternativeName>
        <fullName evidence="26 28">20-hydroxyeicosatetraenoic acid synthase</fullName>
        <shortName>20-HETE synthase</shortName>
    </alternativeName>
    <alternativeName>
        <fullName>CYP4AII</fullName>
    </alternativeName>
    <alternativeName>
        <fullName>CYPIVA11</fullName>
    </alternativeName>
    <alternativeName>
        <fullName>Cytochrome P-450HK-omega</fullName>
    </alternativeName>
    <alternativeName>
        <fullName>Cytochrome P450HL-omega</fullName>
    </alternativeName>
    <alternativeName>
        <fullName>Fatty acid omega-hydroxylase</fullName>
    </alternativeName>
    <alternativeName>
        <fullName evidence="22">Lauric acid omega-hydroxylase</fullName>
    </alternativeName>
    <alternativeName>
        <fullName>Long-chain fatty acid omega-monooxygenase</fullName>
        <ecNumber evidence="10 13">1.14.14.80</ecNumber>
    </alternativeName>
</protein>
<gene>
    <name evidence="21 32" type="primary">CYP4A11</name>
    <name type="synonym">CYP4A2</name>
</gene>
<keyword id="KW-0025">Alternative splicing</keyword>
<keyword id="KW-0903">Direct protein sequencing</keyword>
<keyword id="KW-0256">Endoplasmic reticulum</keyword>
<keyword id="KW-0276">Fatty acid metabolism</keyword>
<keyword id="KW-0349">Heme</keyword>
<keyword id="KW-0408">Iron</keyword>
<keyword id="KW-0443">Lipid metabolism</keyword>
<keyword id="KW-0472">Membrane</keyword>
<keyword id="KW-0479">Metal-binding</keyword>
<keyword id="KW-0492">Microsome</keyword>
<keyword id="KW-0503">Monooxygenase</keyword>
<keyword id="KW-0521">NADP</keyword>
<keyword id="KW-0560">Oxidoreductase</keyword>
<keyword id="KW-0597">Phosphoprotein</keyword>
<keyword id="KW-1267">Proteomics identification</keyword>
<keyword id="KW-1185">Reference proteome</keyword>
<name>CP4AB_HUMAN</name>
<sequence>MSVSVLSPSRLLGDVSGILQAASLLILLLLLIKAVQLYLHRQWLLKALQQFPCPPSHWLFGHIQELQQDQELQRIQKWVETFPSACPHWLWGGKVRVQLYDPDYMKVILGRSDPKSHGSYRFLAPWIGYGLLLLNGQTWFQHRRMLTPAFHYDILKPYVGLMADSVRVMLDKWEELLGQDSPLEVFQHVSLMTLDTIMKCAFSHQGSIQVDRNSQSYIQAISDLNNLVFSRVRNAFHQNDTIYSLTSAGRWTHRACQLAHQHTDQVIQLRKAQLQKEGELEKIKRKRHLDFLDILLLAKMENGSILSDKDLRAEVDTFMFEGHDTTASGISWILYALATHPKHQERCREEIHSLLGDGASITWNHLDQMPYTTMCIKEALRLYPPVPGIGRELSTPVTFPDGRSLPKGIMVLLSIYGLHHNPKVWPNPEVFDPFRFAPGSAQHSHAFLPFSGGSRNCIGKQFAMNELKVATALTLLRFELLPDPTRIPIPIARLVLKSKNGIHLRLRRLPNPCEDKDQL</sequence>
<proteinExistence type="evidence at protein level"/>
<organism>
    <name type="scientific">Homo sapiens</name>
    <name type="common">Human</name>
    <dbReference type="NCBI Taxonomy" id="9606"/>
    <lineage>
        <taxon>Eukaryota</taxon>
        <taxon>Metazoa</taxon>
        <taxon>Chordata</taxon>
        <taxon>Craniata</taxon>
        <taxon>Vertebrata</taxon>
        <taxon>Euteleostomi</taxon>
        <taxon>Mammalia</taxon>
        <taxon>Eutheria</taxon>
        <taxon>Euarchontoglires</taxon>
        <taxon>Primates</taxon>
        <taxon>Haplorrhini</taxon>
        <taxon>Catarrhini</taxon>
        <taxon>Hominidae</taxon>
        <taxon>Homo</taxon>
    </lineage>
</organism>
<comment type="function">
    <text evidence="2 3 4 7 8 10 11 12 13 17">A cytochrome P450 monooxygenase involved in the metabolism of fatty acids and their oxygenated derivatives (oxylipins) (PubMed:10553002, PubMed:10660572, PubMed:15611369, PubMed:1739747, PubMed:7679927, PubMed:8914854). Mechanistically, uses molecular oxygen inserting one oxygen atom into a substrate, and reducing the second into a water molecule, with two electrons provided by NADPH via cytochrome P450 reductase (CPR; NADPH-ferrihemoprotein reductase) (PubMed:10553002, PubMed:10660572, PubMed:15611369, PubMed:1739747, PubMed:7679927, PubMed:8914854). Catalyzes predominantly the oxidation of the terminal carbon (omega-oxidation) of saturated and unsaturated fatty acids, the catalytic efficiency decreasing in the following order: dodecanoic &gt; tetradecanoic &gt; (9Z)-octadecenoic &gt; (9Z,12Z)-octadecadienoic &gt; hexadecanoic acid (PubMed:10553002, PubMed:10660572). Acts as a major omega-hydroxylase for dodecanoic (lauric) acid in liver (PubMed:15611369, PubMed:1739747, PubMed:7679927, PubMed:8914854). Participates in omega-hydroxylation of (5Z,8Z,11Z,14Z)-eicosatetraenoic acid (arachidonate) to 20-hydroxyeicosatetraenoic acid (20-HETE), a signaling molecule acting both as vasoconstrictive and natriuretic with overall effect on arterial blood pressure (PubMed:10620324, PubMed:10660572, PubMed:15611369). Can also catalyze the oxidation of the penultimate carbon (omega-1 oxidation) of fatty acids with lower efficiency (PubMed:7679927). May contribute to the degradation of saturated very long-chain fatty acids (VLCFAs) such as docosanoic acid, by catalyzing successive omega-oxidations to the corresponding dicarboxylic acid, thereby initiating chain shortening (PubMed:18182499). Omega-hydroxylates (9R,10S)-epoxy-octadecanoate stereoisomer (PubMed:15145985). Plays a minor role in omega-oxidation of long-chain 3-hydroxy fatty acids (PubMed:18065749). Has little activity toward prostaglandins A1 and E1 (PubMed:7679927).</text>
</comment>
<comment type="catalytic activity">
    <reaction evidence="2 4 8 10 13 17">
        <text>an organic molecule + reduced [NADPH--hemoprotein reductase] + O2 = an alcohol + oxidized [NADPH--hemoprotein reductase] + H2O + H(+)</text>
        <dbReference type="Rhea" id="RHEA:17149"/>
        <dbReference type="Rhea" id="RHEA-COMP:11964"/>
        <dbReference type="Rhea" id="RHEA-COMP:11965"/>
        <dbReference type="ChEBI" id="CHEBI:15377"/>
        <dbReference type="ChEBI" id="CHEBI:15378"/>
        <dbReference type="ChEBI" id="CHEBI:15379"/>
        <dbReference type="ChEBI" id="CHEBI:30879"/>
        <dbReference type="ChEBI" id="CHEBI:57618"/>
        <dbReference type="ChEBI" id="CHEBI:58210"/>
        <dbReference type="ChEBI" id="CHEBI:142491"/>
        <dbReference type="EC" id="1.14.14.1"/>
    </reaction>
    <physiologicalReaction direction="left-to-right" evidence="28">
        <dbReference type="Rhea" id="RHEA:17150"/>
    </physiologicalReaction>
</comment>
<comment type="catalytic activity">
    <reaction evidence="2 10 13">
        <text>an omega-methyl-long-chain fatty acid + reduced [NADPH--hemoprotein reductase] + O2 = an omega-hydroxy-long-chain fatty acid + oxidized [NADPH--hemoprotein reductase] + H2O + H(+)</text>
        <dbReference type="Rhea" id="RHEA:56748"/>
        <dbReference type="Rhea" id="RHEA-COMP:11964"/>
        <dbReference type="Rhea" id="RHEA-COMP:11965"/>
        <dbReference type="ChEBI" id="CHEBI:15377"/>
        <dbReference type="ChEBI" id="CHEBI:15378"/>
        <dbReference type="ChEBI" id="CHEBI:15379"/>
        <dbReference type="ChEBI" id="CHEBI:57618"/>
        <dbReference type="ChEBI" id="CHEBI:58210"/>
        <dbReference type="ChEBI" id="CHEBI:140991"/>
        <dbReference type="ChEBI" id="CHEBI:140992"/>
        <dbReference type="EC" id="1.14.14.80"/>
    </reaction>
    <physiologicalReaction direction="left-to-right" evidence="24 25">
        <dbReference type="Rhea" id="RHEA:56749"/>
    </physiologicalReaction>
</comment>
<comment type="catalytic activity">
    <reaction evidence="2 3 8 10 11 17">
        <text>dodecanoate + reduced [NADPH--hemoprotein reductase] + O2 = 12-hydroxydodecanoate + oxidized [NADPH--hemoprotein reductase] + H2O + H(+)</text>
        <dbReference type="Rhea" id="RHEA:38947"/>
        <dbReference type="Rhea" id="RHEA-COMP:11964"/>
        <dbReference type="Rhea" id="RHEA-COMP:11965"/>
        <dbReference type="ChEBI" id="CHEBI:15377"/>
        <dbReference type="ChEBI" id="CHEBI:15378"/>
        <dbReference type="ChEBI" id="CHEBI:15379"/>
        <dbReference type="ChEBI" id="CHEBI:18262"/>
        <dbReference type="ChEBI" id="CHEBI:36204"/>
        <dbReference type="ChEBI" id="CHEBI:57618"/>
        <dbReference type="ChEBI" id="CHEBI:58210"/>
    </reaction>
    <physiologicalReaction direction="left-to-right" evidence="25">
        <dbReference type="Rhea" id="RHEA:38948"/>
    </physiologicalReaction>
</comment>
<comment type="catalytic activity">
    <reaction evidence="2 3 10">
        <text>tetradecanoate + reduced [NADPH--hemoprotein reductase] + O2 = 14-hydroxytetradecanoate + oxidized [NADPH--hemoprotein reductase] + H2O + H(+)</text>
        <dbReference type="Rhea" id="RHEA:40203"/>
        <dbReference type="Rhea" id="RHEA-COMP:11964"/>
        <dbReference type="Rhea" id="RHEA-COMP:11965"/>
        <dbReference type="ChEBI" id="CHEBI:15377"/>
        <dbReference type="ChEBI" id="CHEBI:15378"/>
        <dbReference type="ChEBI" id="CHEBI:15379"/>
        <dbReference type="ChEBI" id="CHEBI:30807"/>
        <dbReference type="ChEBI" id="CHEBI:57618"/>
        <dbReference type="ChEBI" id="CHEBI:58210"/>
        <dbReference type="ChEBI" id="CHEBI:77033"/>
    </reaction>
    <physiologicalReaction direction="left-to-right" evidence="25">
        <dbReference type="Rhea" id="RHEA:40204"/>
    </physiologicalReaction>
</comment>
<comment type="catalytic activity">
    <reaction evidence="2 3 10">
        <text>hexadecanoate + reduced [NADPH--hemoprotein reductase] + O2 = 16-hydroxyhexadecanoate + oxidized [NADPH--hemoprotein reductase] + H2O + H(+)</text>
        <dbReference type="Rhea" id="RHEA:40199"/>
        <dbReference type="Rhea" id="RHEA-COMP:11964"/>
        <dbReference type="Rhea" id="RHEA-COMP:11965"/>
        <dbReference type="ChEBI" id="CHEBI:7896"/>
        <dbReference type="ChEBI" id="CHEBI:15377"/>
        <dbReference type="ChEBI" id="CHEBI:15378"/>
        <dbReference type="ChEBI" id="CHEBI:15379"/>
        <dbReference type="ChEBI" id="CHEBI:55329"/>
        <dbReference type="ChEBI" id="CHEBI:57618"/>
        <dbReference type="ChEBI" id="CHEBI:58210"/>
        <dbReference type="EC" id="1.14.14.80"/>
    </reaction>
    <physiologicalReaction direction="left-to-right" evidence="24 25">
        <dbReference type="Rhea" id="RHEA:40200"/>
    </physiologicalReaction>
</comment>
<comment type="catalytic activity">
    <reaction evidence="2">
        <text>(9Z)-octadecenoate + reduced [NADPH--hemoprotein reductase] + O2 = 18-hydroxy-(9Z)-octadecenoate + oxidized [NADPH--hemoprotein reductase] + H2O + H(+)</text>
        <dbReference type="Rhea" id="RHEA:41728"/>
        <dbReference type="Rhea" id="RHEA-COMP:11964"/>
        <dbReference type="Rhea" id="RHEA-COMP:11965"/>
        <dbReference type="ChEBI" id="CHEBI:15377"/>
        <dbReference type="ChEBI" id="CHEBI:15378"/>
        <dbReference type="ChEBI" id="CHEBI:15379"/>
        <dbReference type="ChEBI" id="CHEBI:30823"/>
        <dbReference type="ChEBI" id="CHEBI:57618"/>
        <dbReference type="ChEBI" id="CHEBI:58210"/>
        <dbReference type="ChEBI" id="CHEBI:78424"/>
        <dbReference type="EC" id="1.14.14.80"/>
    </reaction>
    <physiologicalReaction direction="left-to-right" evidence="24">
        <dbReference type="Rhea" id="RHEA:41729"/>
    </physiologicalReaction>
</comment>
<comment type="catalytic activity">
    <reaction evidence="3 4 8">
        <text>(5Z,8Z,11Z,14Z)-eicosatetraenoate + reduced [NADPH--hemoprotein reductase] + O2 = 20-hydroxy-(5Z,8Z,11Z,14Z)-eicosatetraenoate + oxidized [NADPH--hemoprotein reductase] + H2O + H(+)</text>
        <dbReference type="Rhea" id="RHEA:39755"/>
        <dbReference type="Rhea" id="RHEA-COMP:11964"/>
        <dbReference type="Rhea" id="RHEA-COMP:11965"/>
        <dbReference type="ChEBI" id="CHEBI:15377"/>
        <dbReference type="ChEBI" id="CHEBI:15378"/>
        <dbReference type="ChEBI" id="CHEBI:15379"/>
        <dbReference type="ChEBI" id="CHEBI:32395"/>
        <dbReference type="ChEBI" id="CHEBI:57618"/>
        <dbReference type="ChEBI" id="CHEBI:58210"/>
        <dbReference type="ChEBI" id="CHEBI:76624"/>
    </reaction>
    <physiologicalReaction direction="left-to-right" evidence="25 26">
        <dbReference type="Rhea" id="RHEA:39756"/>
    </physiologicalReaction>
</comment>
<comment type="catalytic activity">
    <reaction evidence="12">
        <text>22-hydroxydocosanoate + reduced [NADPH--hemoprotein reductase] + O2 = 22-oxodocosanoate + oxidized [NADPH--hemoprotein reductase] + 2 H2O + H(+)</text>
        <dbReference type="Rhea" id="RHEA:39055"/>
        <dbReference type="Rhea" id="RHEA-COMP:11964"/>
        <dbReference type="Rhea" id="RHEA-COMP:11965"/>
        <dbReference type="ChEBI" id="CHEBI:15377"/>
        <dbReference type="ChEBI" id="CHEBI:15378"/>
        <dbReference type="ChEBI" id="CHEBI:15379"/>
        <dbReference type="ChEBI" id="CHEBI:57618"/>
        <dbReference type="ChEBI" id="CHEBI:58210"/>
        <dbReference type="ChEBI" id="CHEBI:76298"/>
        <dbReference type="ChEBI" id="CHEBI:76304"/>
    </reaction>
    <physiologicalReaction direction="left-to-right" evidence="31">
        <dbReference type="Rhea" id="RHEA:39056"/>
    </physiologicalReaction>
</comment>
<comment type="catalytic activity">
    <reaction evidence="12">
        <text>22-oxodocosanoate + reduced [NADPH--hemoprotein reductase] + O2 = docosanedioate + oxidized [NADPH--hemoprotein reductase] + H2O + 2 H(+)</text>
        <dbReference type="Rhea" id="RHEA:39043"/>
        <dbReference type="Rhea" id="RHEA-COMP:11964"/>
        <dbReference type="Rhea" id="RHEA-COMP:11965"/>
        <dbReference type="ChEBI" id="CHEBI:15377"/>
        <dbReference type="ChEBI" id="CHEBI:15378"/>
        <dbReference type="ChEBI" id="CHEBI:15379"/>
        <dbReference type="ChEBI" id="CHEBI:57618"/>
        <dbReference type="ChEBI" id="CHEBI:58210"/>
        <dbReference type="ChEBI" id="CHEBI:76298"/>
        <dbReference type="ChEBI" id="CHEBI:76299"/>
    </reaction>
    <physiologicalReaction direction="left-to-right" evidence="31">
        <dbReference type="Rhea" id="RHEA:39044"/>
    </physiologicalReaction>
</comment>
<comment type="catalytic activity">
    <reaction evidence="7">
        <text>(9R,10S)-epoxy-octadecanoate + reduced [NADPH--hemoprotein reductase] + O2 = 18-hydroxy-(9R,10S)-epoxy-octadecanoate + oxidized [NADPH--hemoprotein reductase] + H2O + H(+)</text>
        <dbReference type="Rhea" id="RHEA:53556"/>
        <dbReference type="Rhea" id="RHEA-COMP:11964"/>
        <dbReference type="Rhea" id="RHEA-COMP:11965"/>
        <dbReference type="ChEBI" id="CHEBI:15377"/>
        <dbReference type="ChEBI" id="CHEBI:15378"/>
        <dbReference type="ChEBI" id="CHEBI:15379"/>
        <dbReference type="ChEBI" id="CHEBI:57618"/>
        <dbReference type="ChEBI" id="CHEBI:58210"/>
        <dbReference type="ChEBI" id="CHEBI:137459"/>
        <dbReference type="ChEBI" id="CHEBI:137460"/>
    </reaction>
    <physiologicalReaction direction="left-to-right" evidence="27">
        <dbReference type="Rhea" id="RHEA:53557"/>
    </physiologicalReaction>
</comment>
<comment type="catalytic activity">
    <reaction evidence="11">
        <text>3-hydroxyhexadecanoate + reduced [NADPH--hemoprotein reductase] + O2 = 3,16-dihydroxyhexadecanoate + oxidized [NADPH--hemoprotein reductase] + H2O + H(+)</text>
        <dbReference type="Rhea" id="RHEA:39731"/>
        <dbReference type="Rhea" id="RHEA-COMP:11964"/>
        <dbReference type="Rhea" id="RHEA-COMP:11965"/>
        <dbReference type="ChEBI" id="CHEBI:15377"/>
        <dbReference type="ChEBI" id="CHEBI:15378"/>
        <dbReference type="ChEBI" id="CHEBI:15379"/>
        <dbReference type="ChEBI" id="CHEBI:57618"/>
        <dbReference type="ChEBI" id="CHEBI:58210"/>
        <dbReference type="ChEBI" id="CHEBI:63904"/>
        <dbReference type="ChEBI" id="CHEBI:76613"/>
    </reaction>
    <physiologicalReaction direction="left-to-right" evidence="30">
        <dbReference type="Rhea" id="RHEA:39732"/>
    </physiologicalReaction>
</comment>
<comment type="cofactor">
    <cofactor evidence="5">
        <name>heme</name>
        <dbReference type="ChEBI" id="CHEBI:30413"/>
    </cofactor>
</comment>
<comment type="activity regulation">
    <text evidence="2 13">Activated by cytochrome b5.</text>
</comment>
<comment type="biophysicochemical properties">
    <kinetics>
        <KM evidence="8">11 uM for dodecanoic acid</KM>
        <KM evidence="8">37 uM for (5Z,8Z,11Z,14Z)-eicosatetraenoic acid</KM>
        <text evidence="3">kcat is 42 min(-1) with dodecanoic acid as substrate. kcat is 50 min(-1) with tetradecanoic acid as substrate. kcat is 10 min(-1) with hexadecanoic acid as substrate. kcat is 0.4 min(-1) with (9Z)-octadecenoic acid as substrate. kcat is 0.4 min(-1) with (5Z,8Z,11Z,14Z)-eicosatetraenoic acid as substrate.</text>
    </kinetics>
</comment>
<comment type="pathway">
    <text evidence="8">Lipid metabolism; arachidonate metabolism.</text>
</comment>
<comment type="pathway">
    <text evidence="3 4 8">Lipid metabolism; oxylipin biosynthesis.</text>
</comment>
<comment type="subcellular location">
    <subcellularLocation>
        <location evidence="29">Endoplasmic reticulum membrane</location>
        <topology evidence="23">Peripheral membrane protein</topology>
    </subcellularLocation>
    <subcellularLocation>
        <location evidence="29">Microsome membrane</location>
        <topology evidence="23">Peripheral membrane protein</topology>
    </subcellularLocation>
</comment>
<comment type="alternative products">
    <event type="alternative splicing"/>
    <isoform>
        <id>Q02928-1</id>
        <name>1</name>
        <sequence type="displayed"/>
    </isoform>
    <isoform>
        <id>Q02928-2</id>
        <name>2</name>
        <sequence type="described" ref="VSP_034595"/>
    </isoform>
</comment>
<comment type="tissue specificity">
    <text evidence="4 13">Expressed in liver (PubMed:7679927). Expressed in S2 and S3 segments of proximal tubules in cortex and outer medulla of kidney (PubMed:10660572, PubMed:7679927).</text>
</comment>
<comment type="polymorphism">
    <text>CYP4A11v seems to be a rare allelic variant of CYP4A11, it seems to be unstable and not to metabolize lauric acid.</text>
</comment>
<comment type="similarity">
    <text evidence="23">Belongs to the cytochrome P450 family.</text>
</comment>
<comment type="online information" name="PharmVar Pharmacogen Variation Consortium">
    <link uri="https://www.pharmvar.org/gene/CYP4A11"/>
    <text>CYP4A11 alleles</text>
</comment>